<accession>B7ZRM8</accession>
<reference evidence="6" key="1">
    <citation type="submission" date="2008-11" db="EMBL/GenBank/DDBJ databases">
        <authorList>
            <consortium name="NIH - Xenopus Gene Collection (XGC) project"/>
        </authorList>
    </citation>
    <scope>NUCLEOTIDE SEQUENCE [LARGE SCALE MRNA]</scope>
</reference>
<gene>
    <name type="primary">mecom-b</name>
    <name type="synonym">evi1-b</name>
</gene>
<protein>
    <recommendedName>
        <fullName>MDS1 and EVI1 complex locus protein EVI1-B</fullName>
    </recommendedName>
    <alternativeName>
        <fullName>Ecotropic virus integration site 1 protein homolog-B</fullName>
    </alternativeName>
</protein>
<name>EVI1B_XENLA</name>
<proteinExistence type="evidence at transcript level"/>
<comment type="function">
    <text evidence="1">Transcriptional repressor during pronephros development. Plays a role in regionalization of the pronephros; may promote formation of the distal tubule and duct over formation of the glomus and proximal tubule (By similarity).</text>
</comment>
<comment type="subunit">
    <text evidence="1 2">Homooligomer. Interacts with ctbp.</text>
</comment>
<comment type="subcellular location">
    <subcellularLocation>
        <location evidence="2">Nucleus</location>
    </subcellularLocation>
    <subcellularLocation>
        <location evidence="2">Nucleus speckle</location>
    </subcellularLocation>
</comment>
<comment type="domain">
    <text evidence="1">The CTBP-binding motifs and the N-terminal group of zinc fingers are required for repressor activity in the pronephros.</text>
</comment>
<keyword id="KW-0217">Developmental protein</keyword>
<keyword id="KW-0238">DNA-binding</keyword>
<keyword id="KW-0479">Metal-binding</keyword>
<keyword id="KW-0539">Nucleus</keyword>
<keyword id="KW-1185">Reference proteome</keyword>
<keyword id="KW-0677">Repeat</keyword>
<keyword id="KW-0678">Repressor</keyword>
<keyword id="KW-0804">Transcription</keyword>
<keyword id="KW-0805">Transcription regulation</keyword>
<keyword id="KW-0862">Zinc</keyword>
<keyword id="KW-0863">Zinc-finger</keyword>
<feature type="chain" id="PRO_0000392431" description="MDS1 and EVI1 complex locus protein EVI1-B">
    <location>
        <begin position="1"/>
        <end position="1050"/>
    </location>
</feature>
<feature type="zinc finger region" description="C2H2-type 1" evidence="4">
    <location>
        <begin position="21"/>
        <end position="48"/>
    </location>
</feature>
<feature type="zinc finger region" description="C2H2-type 2" evidence="4">
    <location>
        <begin position="75"/>
        <end position="97"/>
    </location>
</feature>
<feature type="zinc finger region" description="C2H2-type 3" evidence="4">
    <location>
        <begin position="103"/>
        <end position="125"/>
    </location>
</feature>
<feature type="zinc finger region" description="C2H2-type 4; degenerate" evidence="4">
    <location>
        <begin position="131"/>
        <end position="155"/>
    </location>
</feature>
<feature type="zinc finger region" description="C2H2-type 5" evidence="4">
    <location>
        <begin position="161"/>
        <end position="183"/>
    </location>
</feature>
<feature type="zinc finger region" description="C2H2-type 6" evidence="4">
    <location>
        <begin position="189"/>
        <end position="211"/>
    </location>
</feature>
<feature type="zinc finger region" description="C2H2-type 7; atypical" evidence="4">
    <location>
        <begin position="218"/>
        <end position="240"/>
    </location>
</feature>
<feature type="zinc finger region" description="C2H2-type 8" evidence="4">
    <location>
        <begin position="731"/>
        <end position="753"/>
    </location>
</feature>
<feature type="zinc finger region" description="C2H2-type 9" evidence="4">
    <location>
        <begin position="759"/>
        <end position="782"/>
    </location>
</feature>
<feature type="zinc finger region" description="C2H2-type 10" evidence="4">
    <location>
        <begin position="788"/>
        <end position="810"/>
    </location>
</feature>
<feature type="region of interest" description="Disordered" evidence="5">
    <location>
        <begin position="371"/>
        <end position="421"/>
    </location>
</feature>
<feature type="region of interest" description="Disordered" evidence="5">
    <location>
        <begin position="529"/>
        <end position="612"/>
    </location>
</feature>
<feature type="region of interest" description="Disordered" evidence="5">
    <location>
        <begin position="928"/>
        <end position="951"/>
    </location>
</feature>
<feature type="short sequence motif" description="Nuclear localization signal" evidence="3">
    <location>
        <begin position="420"/>
        <end position="433"/>
    </location>
</feature>
<feature type="short sequence motif" description="CTBP-binding motif 1" evidence="2">
    <location>
        <begin position="551"/>
        <end position="555"/>
    </location>
</feature>
<feature type="short sequence motif" description="CTBP-binding motif 2" evidence="2">
    <location>
        <begin position="582"/>
        <end position="586"/>
    </location>
</feature>
<feature type="compositionally biased region" description="Basic and acidic residues" evidence="5">
    <location>
        <begin position="379"/>
        <end position="390"/>
    </location>
</feature>
<feature type="compositionally biased region" description="Polar residues" evidence="5">
    <location>
        <begin position="397"/>
        <end position="411"/>
    </location>
</feature>
<feature type="compositionally biased region" description="Basic and acidic residues" evidence="5">
    <location>
        <begin position="529"/>
        <end position="542"/>
    </location>
</feature>
<feature type="compositionally biased region" description="Low complexity" evidence="5">
    <location>
        <begin position="564"/>
        <end position="576"/>
    </location>
</feature>
<feature type="compositionally biased region" description="Polar residues" evidence="5">
    <location>
        <begin position="588"/>
        <end position="598"/>
    </location>
</feature>
<feature type="compositionally biased region" description="Basic and acidic residues" evidence="5">
    <location>
        <begin position="599"/>
        <end position="612"/>
    </location>
</feature>
<dbReference type="EMBL" id="BC170222">
    <property type="protein sequence ID" value="AAI70222.1"/>
    <property type="molecule type" value="mRNA"/>
</dbReference>
<dbReference type="RefSeq" id="NP_001154861.1">
    <property type="nucleotide sequence ID" value="NM_001161389.2"/>
</dbReference>
<dbReference type="GeneID" id="100301954"/>
<dbReference type="KEGG" id="xla:100301954"/>
<dbReference type="AGR" id="Xenbase:XB-GENE-6448217"/>
<dbReference type="CTD" id="100301954"/>
<dbReference type="Xenbase" id="XB-GENE-6448217">
    <property type="gene designation" value="mecom.S"/>
</dbReference>
<dbReference type="OrthoDB" id="10004641at2759"/>
<dbReference type="Proteomes" id="UP000186698">
    <property type="component" value="Chromosome 5S"/>
</dbReference>
<dbReference type="Bgee" id="100301954">
    <property type="expression patterns" value="Expressed in stomach and 12 other cell types or tissues"/>
</dbReference>
<dbReference type="GO" id="GO:0016607">
    <property type="term" value="C:nuclear speck"/>
    <property type="evidence" value="ECO:0007669"/>
    <property type="project" value="UniProtKB-SubCell"/>
</dbReference>
<dbReference type="GO" id="GO:0005634">
    <property type="term" value="C:nucleus"/>
    <property type="evidence" value="ECO:0000318"/>
    <property type="project" value="GO_Central"/>
</dbReference>
<dbReference type="GO" id="GO:0001228">
    <property type="term" value="F:DNA-binding transcription activator activity, RNA polymerase II-specific"/>
    <property type="evidence" value="ECO:0000318"/>
    <property type="project" value="GO_Central"/>
</dbReference>
<dbReference type="GO" id="GO:0000978">
    <property type="term" value="F:RNA polymerase II cis-regulatory region sequence-specific DNA binding"/>
    <property type="evidence" value="ECO:0000318"/>
    <property type="project" value="GO_Central"/>
</dbReference>
<dbReference type="GO" id="GO:0008270">
    <property type="term" value="F:zinc ion binding"/>
    <property type="evidence" value="ECO:0007669"/>
    <property type="project" value="UniProtKB-KW"/>
</dbReference>
<dbReference type="GO" id="GO:0039013">
    <property type="term" value="P:pronephric distal tubule morphogenesis"/>
    <property type="evidence" value="ECO:0000250"/>
    <property type="project" value="UniProtKB"/>
</dbReference>
<dbReference type="GO" id="GO:0039022">
    <property type="term" value="P:pronephric duct development"/>
    <property type="evidence" value="ECO:0000250"/>
    <property type="project" value="UniProtKB"/>
</dbReference>
<dbReference type="GO" id="GO:0072196">
    <property type="term" value="P:proximal/distal pattern formation involved in pronephric nephron development"/>
    <property type="evidence" value="ECO:0000250"/>
    <property type="project" value="UniProtKB"/>
</dbReference>
<dbReference type="GO" id="GO:0006357">
    <property type="term" value="P:regulation of transcription by RNA polymerase II"/>
    <property type="evidence" value="ECO:0000318"/>
    <property type="project" value="GO_Central"/>
</dbReference>
<dbReference type="FunFam" id="3.30.160.60:FF:000112">
    <property type="entry name" value="Mds1 and evi1 complex locus protein"/>
    <property type="match status" value="1"/>
</dbReference>
<dbReference type="FunFam" id="3.30.160.60:FF:000126">
    <property type="entry name" value="Mds1 and evi1 complex locus protein"/>
    <property type="match status" value="1"/>
</dbReference>
<dbReference type="FunFam" id="3.30.160.60:FF:000150">
    <property type="entry name" value="Mds1 and evi1 complex locus protein"/>
    <property type="match status" value="1"/>
</dbReference>
<dbReference type="FunFam" id="3.30.160.60:FF:000159">
    <property type="entry name" value="Mds1 and evi1 complex locus protein"/>
    <property type="match status" value="1"/>
</dbReference>
<dbReference type="FunFam" id="3.30.160.60:FF:000192">
    <property type="entry name" value="Mds1 and evi1 complex locus protein"/>
    <property type="match status" value="1"/>
</dbReference>
<dbReference type="FunFam" id="3.30.160.60:FF:000929">
    <property type="entry name" value="Uncharacterized protein, isoform B"/>
    <property type="match status" value="1"/>
</dbReference>
<dbReference type="Gene3D" id="3.30.160.60">
    <property type="entry name" value="Classic Zinc Finger"/>
    <property type="match status" value="8"/>
</dbReference>
<dbReference type="InterPro" id="IPR036236">
    <property type="entry name" value="Znf_C2H2_sf"/>
</dbReference>
<dbReference type="InterPro" id="IPR013087">
    <property type="entry name" value="Znf_C2H2_type"/>
</dbReference>
<dbReference type="PANTHER" id="PTHR24376">
    <property type="entry name" value="ZINC FINGER PROTEIN"/>
    <property type="match status" value="1"/>
</dbReference>
<dbReference type="PANTHER" id="PTHR24376:SF216">
    <property type="entry name" value="ZINC FINGER PROTEIN 420-LIKE"/>
    <property type="match status" value="1"/>
</dbReference>
<dbReference type="Pfam" id="PF00096">
    <property type="entry name" value="zf-C2H2"/>
    <property type="match status" value="8"/>
</dbReference>
<dbReference type="Pfam" id="PF13912">
    <property type="entry name" value="zf-C2H2_6"/>
    <property type="match status" value="1"/>
</dbReference>
<dbReference type="SMART" id="SM00355">
    <property type="entry name" value="ZnF_C2H2"/>
    <property type="match status" value="10"/>
</dbReference>
<dbReference type="SUPFAM" id="SSF57667">
    <property type="entry name" value="beta-beta-alpha zinc fingers"/>
    <property type="match status" value="5"/>
</dbReference>
<dbReference type="PROSITE" id="PS00028">
    <property type="entry name" value="ZINC_FINGER_C2H2_1"/>
    <property type="match status" value="7"/>
</dbReference>
<dbReference type="PROSITE" id="PS50157">
    <property type="entry name" value="ZINC_FINGER_C2H2_2"/>
    <property type="match status" value="10"/>
</dbReference>
<evidence type="ECO:0000250" key="1">
    <source>
        <dbReference type="UniProtKB" id="B7ZRU9"/>
    </source>
</evidence>
<evidence type="ECO:0000250" key="2">
    <source>
        <dbReference type="UniProtKB" id="Q03112"/>
    </source>
</evidence>
<evidence type="ECO:0000255" key="3"/>
<evidence type="ECO:0000255" key="4">
    <source>
        <dbReference type="PROSITE-ProRule" id="PRU00042"/>
    </source>
</evidence>
<evidence type="ECO:0000256" key="5">
    <source>
        <dbReference type="SAM" id="MobiDB-lite"/>
    </source>
</evidence>
<evidence type="ECO:0000312" key="6">
    <source>
        <dbReference type="EMBL" id="AAI70222.1"/>
    </source>
</evidence>
<sequence length="1050" mass="118703">MKSEDYTYARMAPDIHEERQYHCEECDQLFESKTELSNHQKYSCGTPHSAFSLVENSFPPILNDDSDLTEMQHAHECKECDQVFPDMQSLEKHLLSHTEEREYKCDQCPKAFNWKSNLIRHQMSHDTGKHYECENCSKQVFTDPSNLQRHIRSQHVGARAHACSECGKTFATSSGLKQHKHIHSSVKPFVCEVCHKSYTQFSNLCRHKRMHADCRTQIKCKDCGQMFSTTSSLNKHRRFCEGKNHFTAGGLFRQGISLPGNTAMDKVSMIGMNHAGLADYFGASRHAAGLTFPTAPGFPFSFPGLFPSSLYHRPHLIPPASPVKGLPGVEQSNKSQSLHVNQPQVLPATQDILKALNKHHSVDENKALEFITENNLNQRPHEKVSDHSESTDLDDVSTPSGSDLETTSGSDLESDIESDKDKLKENGKLYKDKISPLQSLAALNSKREYNNHSVFSPCLEEQTVTGAVNDSIKAIASIAEKYFGSTGLVGLPDKKGTSLPYPSMFPLPFFPAISQSMYTFPERDVRPLPLKVEPESPKESKKVQKGTTESAFDLTTKCKEEKASPNAPSKSSAPTSSKHEQPLDLSMGSRSRATTTKQTESRKNHIFGEKKDIDSELKKTSEHFLQHARPAPFFMDPIYRVEKRKTMDPLEVLKEKYLRSSSGFLFHPQFPLPDQRTWMSAIENMAEKLESFNALKPEANDLIQSVPSMFSFRASSSALPENLLRKGKERYTCRYCGKIFPRSANLTRHLRTHTGEQPYRCKYCDRSFSISSNLQRHIRNIHNKEKPFKCHLCDRCFGQQTNLDRHLKKHENGNLSGTAASSPHSEIEGTGAILEEKEDSYFNEIRNFIGNNSHNKQSPLNIDERINGSHDKIMLTGQNSDILDDDEIEDEAILEDDEESDIDVKVMKEPNASAMLKNCSDEFEEESKSEVNCKVSPSRHDDDDDDEEEDFKKSLSALDHIRHFTDSLKIRKMDDGQFNDAELSPFTASHLTDDLKHPLYRKSKSQTYAMMLSLSDQESMHPTTHTSSSMWHNLARAAAESTALHSVSHV</sequence>
<organism>
    <name type="scientific">Xenopus laevis</name>
    <name type="common">African clawed frog</name>
    <dbReference type="NCBI Taxonomy" id="8355"/>
    <lineage>
        <taxon>Eukaryota</taxon>
        <taxon>Metazoa</taxon>
        <taxon>Chordata</taxon>
        <taxon>Craniata</taxon>
        <taxon>Vertebrata</taxon>
        <taxon>Euteleostomi</taxon>
        <taxon>Amphibia</taxon>
        <taxon>Batrachia</taxon>
        <taxon>Anura</taxon>
        <taxon>Pipoidea</taxon>
        <taxon>Pipidae</taxon>
        <taxon>Xenopodinae</taxon>
        <taxon>Xenopus</taxon>
        <taxon>Xenopus</taxon>
    </lineage>
</organism>